<gene>
    <name evidence="1" type="primary">upp</name>
    <name type="ordered locus">MmarC6_0207</name>
</gene>
<sequence>MIKDERWEGVYSFEDSPYLMETLTDLRKIGTENISFRKGLVRLGRYMGYELTKTMEFEKMPIQTPLEKTQGVFAKDRKNVVIITILRAAFPLMEGLIKNFESAKVGIVSASRGHAPDFNIEMNYIKVPQLNPEDTVIVSDPMIATGSTLIHVLREFKDSKPKRMMIVGVLAAPEGINAVKAEFPDVEIFVTKIDEKLNKDGYIVPGLGDAGDRAFGEPFKVSMLPQMHNLE</sequence>
<accession>A9A7A5</accession>
<reference key="1">
    <citation type="submission" date="2007-10" db="EMBL/GenBank/DDBJ databases">
        <title>Complete sequence of Methanococcus maripaludis C6.</title>
        <authorList>
            <consortium name="US DOE Joint Genome Institute"/>
            <person name="Copeland A."/>
            <person name="Lucas S."/>
            <person name="Lapidus A."/>
            <person name="Barry K."/>
            <person name="Glavina del Rio T."/>
            <person name="Dalin E."/>
            <person name="Tice H."/>
            <person name="Pitluck S."/>
            <person name="Clum A."/>
            <person name="Schmutz J."/>
            <person name="Larimer F."/>
            <person name="Land M."/>
            <person name="Hauser L."/>
            <person name="Kyrpides N."/>
            <person name="Mikhailova N."/>
            <person name="Sieprawska-Lupa M."/>
            <person name="Whitman W.B."/>
            <person name="Richardson P."/>
        </authorList>
    </citation>
    <scope>NUCLEOTIDE SEQUENCE [LARGE SCALE GENOMIC DNA]</scope>
    <source>
        <strain>C6 / ATCC BAA-1332</strain>
    </source>
</reference>
<name>UPP_METM6</name>
<dbReference type="EC" id="2.4.2.9" evidence="1"/>
<dbReference type="EMBL" id="CP000867">
    <property type="protein sequence ID" value="ABX01029.1"/>
    <property type="molecule type" value="Genomic_DNA"/>
</dbReference>
<dbReference type="SMR" id="A9A7A5"/>
<dbReference type="STRING" id="444158.MmarC6_0207"/>
<dbReference type="KEGG" id="mmx:MmarC6_0207"/>
<dbReference type="eggNOG" id="arCOG04128">
    <property type="taxonomic scope" value="Archaea"/>
</dbReference>
<dbReference type="HOGENOM" id="CLU_067096_2_0_2"/>
<dbReference type="OrthoDB" id="80352at2157"/>
<dbReference type="PhylomeDB" id="A9A7A5"/>
<dbReference type="UniPathway" id="UPA00574">
    <property type="reaction ID" value="UER00636"/>
</dbReference>
<dbReference type="GO" id="GO:0005525">
    <property type="term" value="F:GTP binding"/>
    <property type="evidence" value="ECO:0007669"/>
    <property type="project" value="UniProtKB-KW"/>
</dbReference>
<dbReference type="GO" id="GO:0000287">
    <property type="term" value="F:magnesium ion binding"/>
    <property type="evidence" value="ECO:0007669"/>
    <property type="project" value="UniProtKB-UniRule"/>
</dbReference>
<dbReference type="GO" id="GO:0004845">
    <property type="term" value="F:uracil phosphoribosyltransferase activity"/>
    <property type="evidence" value="ECO:0007669"/>
    <property type="project" value="UniProtKB-UniRule"/>
</dbReference>
<dbReference type="GO" id="GO:0044206">
    <property type="term" value="P:UMP salvage"/>
    <property type="evidence" value="ECO:0007669"/>
    <property type="project" value="UniProtKB-UniRule"/>
</dbReference>
<dbReference type="GO" id="GO:0006223">
    <property type="term" value="P:uracil salvage"/>
    <property type="evidence" value="ECO:0007669"/>
    <property type="project" value="InterPro"/>
</dbReference>
<dbReference type="CDD" id="cd06223">
    <property type="entry name" value="PRTases_typeI"/>
    <property type="match status" value="1"/>
</dbReference>
<dbReference type="Gene3D" id="3.40.50.2020">
    <property type="match status" value="1"/>
</dbReference>
<dbReference type="HAMAP" id="MF_01218_A">
    <property type="entry name" value="Upp_A"/>
    <property type="match status" value="1"/>
</dbReference>
<dbReference type="InterPro" id="IPR000836">
    <property type="entry name" value="PRibTrfase_dom"/>
</dbReference>
<dbReference type="InterPro" id="IPR029057">
    <property type="entry name" value="PRTase-like"/>
</dbReference>
<dbReference type="InterPro" id="IPR034331">
    <property type="entry name" value="Upp_A"/>
</dbReference>
<dbReference type="InterPro" id="IPR005765">
    <property type="entry name" value="Ura_phspho_trans"/>
</dbReference>
<dbReference type="NCBIfam" id="NF001097">
    <property type="entry name" value="PRK00129.1"/>
    <property type="match status" value="1"/>
</dbReference>
<dbReference type="NCBIfam" id="TIGR01091">
    <property type="entry name" value="upp"/>
    <property type="match status" value="1"/>
</dbReference>
<dbReference type="Pfam" id="PF14681">
    <property type="entry name" value="UPRTase"/>
    <property type="match status" value="1"/>
</dbReference>
<dbReference type="SUPFAM" id="SSF53271">
    <property type="entry name" value="PRTase-like"/>
    <property type="match status" value="1"/>
</dbReference>
<organism>
    <name type="scientific">Methanococcus maripaludis (strain C6 / ATCC BAA-1332)</name>
    <dbReference type="NCBI Taxonomy" id="444158"/>
    <lineage>
        <taxon>Archaea</taxon>
        <taxon>Methanobacteriati</taxon>
        <taxon>Methanobacteriota</taxon>
        <taxon>Methanomada group</taxon>
        <taxon>Methanococci</taxon>
        <taxon>Methanococcales</taxon>
        <taxon>Methanococcaceae</taxon>
        <taxon>Methanococcus</taxon>
    </lineage>
</organism>
<evidence type="ECO:0000255" key="1">
    <source>
        <dbReference type="HAMAP-Rule" id="MF_01218"/>
    </source>
</evidence>
<protein>
    <recommendedName>
        <fullName evidence="1">Uracil phosphoribosyltransferase</fullName>
        <ecNumber evidence="1">2.4.2.9</ecNumber>
    </recommendedName>
    <alternativeName>
        <fullName evidence="1">UMP pyrophosphorylase</fullName>
    </alternativeName>
    <alternativeName>
        <fullName evidence="1">UPRTase</fullName>
    </alternativeName>
</protein>
<proteinExistence type="inferred from homology"/>
<comment type="function">
    <text evidence="1">Catalyzes the conversion of uracil and 5-phospho-alpha-D-ribose 1-diphosphate (PRPP) to UMP and diphosphate.</text>
</comment>
<comment type="catalytic activity">
    <reaction evidence="1">
        <text>UMP + diphosphate = 5-phospho-alpha-D-ribose 1-diphosphate + uracil</text>
        <dbReference type="Rhea" id="RHEA:13017"/>
        <dbReference type="ChEBI" id="CHEBI:17568"/>
        <dbReference type="ChEBI" id="CHEBI:33019"/>
        <dbReference type="ChEBI" id="CHEBI:57865"/>
        <dbReference type="ChEBI" id="CHEBI:58017"/>
        <dbReference type="EC" id="2.4.2.9"/>
    </reaction>
</comment>
<comment type="cofactor">
    <cofactor evidence="1">
        <name>Mg(2+)</name>
        <dbReference type="ChEBI" id="CHEBI:18420"/>
    </cofactor>
    <text evidence="1">Binds 1 Mg(2+) ion per subunit. The magnesium is bound as Mg-PRPP.</text>
</comment>
<comment type="activity regulation">
    <text evidence="1">Allosterically activated by GTP.</text>
</comment>
<comment type="pathway">
    <text evidence="1">Pyrimidine metabolism; UMP biosynthesis via salvage pathway; UMP from uracil: step 1/1.</text>
</comment>
<comment type="similarity">
    <text evidence="1">Belongs to the UPRTase family.</text>
</comment>
<feature type="chain" id="PRO_1000139140" description="Uracil phosphoribosyltransferase">
    <location>
        <begin position="1"/>
        <end position="231"/>
    </location>
</feature>
<feature type="binding site" evidence="1">
    <location>
        <begin position="38"/>
        <end position="42"/>
    </location>
    <ligand>
        <name>GTP</name>
        <dbReference type="ChEBI" id="CHEBI:37565"/>
    </ligand>
</feature>
<feature type="binding site" evidence="1">
    <location>
        <position position="87"/>
    </location>
    <ligand>
        <name>5-phospho-alpha-D-ribose 1-diphosphate</name>
        <dbReference type="ChEBI" id="CHEBI:58017"/>
    </ligand>
</feature>
<feature type="binding site" evidence="1">
    <location>
        <position position="112"/>
    </location>
    <ligand>
        <name>5-phospho-alpha-D-ribose 1-diphosphate</name>
        <dbReference type="ChEBI" id="CHEBI:58017"/>
    </ligand>
</feature>
<feature type="binding site" evidence="1">
    <location>
        <begin position="140"/>
        <end position="148"/>
    </location>
    <ligand>
        <name>5-phospho-alpha-D-ribose 1-diphosphate</name>
        <dbReference type="ChEBI" id="CHEBI:58017"/>
    </ligand>
</feature>
<feature type="binding site" evidence="1">
    <location>
        <position position="203"/>
    </location>
    <ligand>
        <name>uracil</name>
        <dbReference type="ChEBI" id="CHEBI:17568"/>
    </ligand>
</feature>
<feature type="binding site" evidence="1">
    <location>
        <begin position="208"/>
        <end position="210"/>
    </location>
    <ligand>
        <name>uracil</name>
        <dbReference type="ChEBI" id="CHEBI:17568"/>
    </ligand>
</feature>
<feature type="binding site" evidence="1">
    <location>
        <position position="209"/>
    </location>
    <ligand>
        <name>5-phospho-alpha-D-ribose 1-diphosphate</name>
        <dbReference type="ChEBI" id="CHEBI:58017"/>
    </ligand>
</feature>
<keyword id="KW-0021">Allosteric enzyme</keyword>
<keyword id="KW-0328">Glycosyltransferase</keyword>
<keyword id="KW-0342">GTP-binding</keyword>
<keyword id="KW-0460">Magnesium</keyword>
<keyword id="KW-0547">Nucleotide-binding</keyword>
<keyword id="KW-0808">Transferase</keyword>